<comment type="function">
    <text evidence="1">Translocates 4-amino-4-deoxy-L-arabinose-phosphoundecaprenol (alpha-L-Ara4N-phosphoundecaprenol) from the cytoplasmic to the periplasmic side of the inner membrane.</text>
</comment>
<comment type="pathway">
    <text evidence="1">Bacterial outer membrane biogenesis; lipopolysaccharide biosynthesis.</text>
</comment>
<comment type="subunit">
    <text evidence="1">Heterodimer of ArnE and ArnF.</text>
</comment>
<comment type="subcellular location">
    <subcellularLocation>
        <location evidence="1">Cell inner membrane</location>
        <topology evidence="1">Multi-pass membrane protein</topology>
    </subcellularLocation>
</comment>
<comment type="similarity">
    <text evidence="1">Belongs to the ArnE family.</text>
</comment>
<organism>
    <name type="scientific">Yersinia pestis (strain Pestoides F)</name>
    <dbReference type="NCBI Taxonomy" id="386656"/>
    <lineage>
        <taxon>Bacteria</taxon>
        <taxon>Pseudomonadati</taxon>
        <taxon>Pseudomonadota</taxon>
        <taxon>Gammaproteobacteria</taxon>
        <taxon>Enterobacterales</taxon>
        <taxon>Yersiniaceae</taxon>
        <taxon>Yersinia</taxon>
    </lineage>
</organism>
<sequence>MNSYLLLLMVSLLTCIGQLCQKQAAQCWEQPQARRLNLTLRWLAIAVVSLGLGMLLWLRLLQQLPLSVAYPMLSFNFVLVTLAAQLFYGEKATLRHWLGVAAIMFGILLMSWHL</sequence>
<accession>A4TIM7</accession>
<proteinExistence type="inferred from homology"/>
<reference key="1">
    <citation type="submission" date="2007-02" db="EMBL/GenBank/DDBJ databases">
        <title>Complete sequence of chromosome of Yersinia pestis Pestoides F.</title>
        <authorList>
            <consortium name="US DOE Joint Genome Institute"/>
            <person name="Copeland A."/>
            <person name="Lucas S."/>
            <person name="Lapidus A."/>
            <person name="Barry K."/>
            <person name="Detter J.C."/>
            <person name="Glavina del Rio T."/>
            <person name="Hammon N."/>
            <person name="Israni S."/>
            <person name="Dalin E."/>
            <person name="Tice H."/>
            <person name="Pitluck S."/>
            <person name="Di Bartolo G."/>
            <person name="Chain P."/>
            <person name="Malfatti S."/>
            <person name="Shin M."/>
            <person name="Vergez L."/>
            <person name="Schmutz J."/>
            <person name="Larimer F."/>
            <person name="Land M."/>
            <person name="Hauser L."/>
            <person name="Worsham P."/>
            <person name="Chu M."/>
            <person name="Bearden S."/>
            <person name="Garcia E."/>
            <person name="Richardson P."/>
        </authorList>
    </citation>
    <scope>NUCLEOTIDE SEQUENCE [LARGE SCALE GENOMIC DNA]</scope>
    <source>
        <strain>Pestoides F</strain>
    </source>
</reference>
<feature type="chain" id="PRO_0000383013" description="Probable 4-amino-4-deoxy-L-arabinose-phosphoundecaprenol flippase subunit ArnE">
    <location>
        <begin position="1"/>
        <end position="114"/>
    </location>
</feature>
<feature type="transmembrane region" description="Helical" evidence="1">
    <location>
        <begin position="38"/>
        <end position="58"/>
    </location>
</feature>
<feature type="transmembrane region" description="Helical" evidence="1">
    <location>
        <begin position="64"/>
        <end position="84"/>
    </location>
</feature>
<feature type="transmembrane region" description="Helical" evidence="1">
    <location>
        <begin position="94"/>
        <end position="114"/>
    </location>
</feature>
<feature type="domain" description="EamA" evidence="1">
    <location>
        <begin position="43"/>
        <end position="112"/>
    </location>
</feature>
<dbReference type="EMBL" id="CP000668">
    <property type="protein sequence ID" value="ABP39139.1"/>
    <property type="molecule type" value="Genomic_DNA"/>
</dbReference>
<dbReference type="RefSeq" id="WP_002211820.1">
    <property type="nucleotide sequence ID" value="NZ_CP009715.1"/>
</dbReference>
<dbReference type="SMR" id="A4TIM7"/>
<dbReference type="GeneID" id="57976260"/>
<dbReference type="KEGG" id="ypp:YPDSF_0733"/>
<dbReference type="PATRIC" id="fig|386656.14.peg.3136"/>
<dbReference type="UniPathway" id="UPA00030"/>
<dbReference type="GO" id="GO:0005886">
    <property type="term" value="C:plasma membrane"/>
    <property type="evidence" value="ECO:0007669"/>
    <property type="project" value="UniProtKB-SubCell"/>
</dbReference>
<dbReference type="GO" id="GO:1901505">
    <property type="term" value="F:carbohydrate derivative transmembrane transporter activity"/>
    <property type="evidence" value="ECO:0007669"/>
    <property type="project" value="InterPro"/>
</dbReference>
<dbReference type="GO" id="GO:0009245">
    <property type="term" value="P:lipid A biosynthetic process"/>
    <property type="evidence" value="ECO:0007669"/>
    <property type="project" value="UniProtKB-UniRule"/>
</dbReference>
<dbReference type="GO" id="GO:0009103">
    <property type="term" value="P:lipopolysaccharide biosynthetic process"/>
    <property type="evidence" value="ECO:0007669"/>
    <property type="project" value="UniProtKB-UniRule"/>
</dbReference>
<dbReference type="FunFam" id="1.10.3730.20:FF:000002">
    <property type="entry name" value="Probable 4-amino-4-deoxy-L-arabinose-phosphoundecaprenol flippase subunit ArnE"/>
    <property type="match status" value="1"/>
</dbReference>
<dbReference type="Gene3D" id="1.10.3730.20">
    <property type="match status" value="1"/>
</dbReference>
<dbReference type="HAMAP" id="MF_01869">
    <property type="entry name" value="Flippase_ArnE"/>
    <property type="match status" value="1"/>
</dbReference>
<dbReference type="InterPro" id="IPR000620">
    <property type="entry name" value="EamA_dom"/>
</dbReference>
<dbReference type="InterPro" id="IPR022883">
    <property type="entry name" value="Flippase_ArnE"/>
</dbReference>
<dbReference type="InterPro" id="IPR000390">
    <property type="entry name" value="Small_drug/metabolite_transptr"/>
</dbReference>
<dbReference type="NCBIfam" id="NF011625">
    <property type="entry name" value="PRK15051.1"/>
    <property type="match status" value="1"/>
</dbReference>
<dbReference type="PANTHER" id="PTHR30561:SF23">
    <property type="entry name" value="4-AMINO-4-DEOXY-L-ARABINOSE-PHOSPHOUNDECAPRENOL FLIPPASE SUBUNIT ARNE-RELATED"/>
    <property type="match status" value="1"/>
</dbReference>
<dbReference type="PANTHER" id="PTHR30561">
    <property type="entry name" value="SMR FAMILY PROTON-DEPENDENT DRUG EFFLUX TRANSPORTER SUGE"/>
    <property type="match status" value="1"/>
</dbReference>
<dbReference type="Pfam" id="PF00892">
    <property type="entry name" value="EamA"/>
    <property type="match status" value="1"/>
</dbReference>
<dbReference type="SUPFAM" id="SSF103481">
    <property type="entry name" value="Multidrug resistance efflux transporter EmrE"/>
    <property type="match status" value="1"/>
</dbReference>
<gene>
    <name evidence="1" type="primary">arnE</name>
    <name type="ordered locus">YPDSF_0733</name>
</gene>
<evidence type="ECO:0000255" key="1">
    <source>
        <dbReference type="HAMAP-Rule" id="MF_01869"/>
    </source>
</evidence>
<name>ARNE_YERPP</name>
<protein>
    <recommendedName>
        <fullName evidence="1">Probable 4-amino-4-deoxy-L-arabinose-phosphoundecaprenol flippase subunit ArnE</fullName>
        <shortName evidence="1">L-Ara4N-phosphoundecaprenol flippase subunit ArnE</shortName>
    </recommendedName>
    <alternativeName>
        <fullName evidence="1">Undecaprenyl phosphate-aminoarabinose flippase subunit ArnE</fullName>
    </alternativeName>
</protein>
<keyword id="KW-0997">Cell inner membrane</keyword>
<keyword id="KW-1003">Cell membrane</keyword>
<keyword id="KW-0441">Lipid A biosynthesis</keyword>
<keyword id="KW-0444">Lipid biosynthesis</keyword>
<keyword id="KW-0443">Lipid metabolism</keyword>
<keyword id="KW-0448">Lipopolysaccharide biosynthesis</keyword>
<keyword id="KW-0472">Membrane</keyword>
<keyword id="KW-0812">Transmembrane</keyword>
<keyword id="KW-1133">Transmembrane helix</keyword>
<keyword id="KW-0813">Transport</keyword>